<reference key="1">
    <citation type="journal article" date="1967" name="Arch. Biochem. Biophys.">
        <title>Amino acid sequence studies on artiodacty fibrinopeptides.</title>
        <authorList>
            <person name="Mross G.A."/>
            <person name="Doolittle R.F."/>
        </authorList>
    </citation>
    <scope>PROTEIN SEQUENCE</scope>
</reference>
<evidence type="ECO:0000250" key="1">
    <source>
        <dbReference type="UniProtKB" id="E9PV24"/>
    </source>
</evidence>
<evidence type="ECO:0000250" key="2">
    <source>
        <dbReference type="UniProtKB" id="P02671"/>
    </source>
</evidence>
<accession>P68219</accession>
<accession>P14454</accession>
<proteinExistence type="evidence at protein level"/>
<organism>
    <name type="scientific">Lama vicugna</name>
    <name type="common">Vicugna</name>
    <name type="synonym">Vicugna vicugna</name>
    <dbReference type="NCBI Taxonomy" id="9843"/>
    <lineage>
        <taxon>Eukaryota</taxon>
        <taxon>Metazoa</taxon>
        <taxon>Chordata</taxon>
        <taxon>Craniata</taxon>
        <taxon>Vertebrata</taxon>
        <taxon>Euteleostomi</taxon>
        <taxon>Mammalia</taxon>
        <taxon>Eutheria</taxon>
        <taxon>Laurasiatheria</taxon>
        <taxon>Artiodactyla</taxon>
        <taxon>Tylopoda</taxon>
        <taxon>Camelidae</taxon>
        <taxon>Vicugna</taxon>
    </lineage>
</organism>
<gene>
    <name type="primary">FGA</name>
</gene>
<feature type="peptide" id="PRO_0000009025" description="Fibrinopeptide A">
    <location>
        <begin position="1"/>
        <end position="18"/>
    </location>
</feature>
<feature type="non-terminal residue">
    <location>
        <position position="18"/>
    </location>
</feature>
<protein>
    <recommendedName>
        <fullName>Fibrinogen alpha chain</fullName>
    </recommendedName>
    <component>
        <recommendedName>
            <fullName>Fibrinopeptide A</fullName>
        </recommendedName>
    </component>
</protein>
<comment type="function">
    <text evidence="1">Cleaved by the protease thrombin to yield monomers which, together with fibrinogen beta (FGB) and fibrinogen gamma (FGG), polymerize to form an insoluble fibrin matrix. Fibrin has a major function in hemostasis as one of the primary components of blood clots. In addition, functions during the early stages of wound repair to stabilize the lesion and guide cell migration during re-epithelialization. Was originally thought to be essential for platelet aggregation, based on in vitro studies using anticoagulated blood. However, subsequent studies have shown that it is not absolutely required for thrombus formation in vivo. Enhances expression of SELP in activated platelets via an ITGB3-dependent pathway. Maternal fibrinogen is essential for successful pregnancy. Fibrin deposition is also associated with infection, where it protects against IFNG-mediated hemorrhage. May also facilitate the immune response via both innate and T-cell mediated pathways.</text>
</comment>
<comment type="subunit">
    <text evidence="2">Heterohexamer; disulfide linked. Contains 2 sets of 3 non-identical chains (alpha, beta and gamma). The 2 heterotrimers are in head to head conformation with the N-termini in a small central domain (By similarity).</text>
</comment>
<comment type="subcellular location">
    <subcellularLocation>
        <location>Secreted</location>
    </subcellularLocation>
</comment>
<comment type="domain">
    <text evidence="2">A long coiled coil structure formed by 3 polypeptide chains connects the central nodule to the C-terminal domains (distal nodules). The long C-terminal ends of the alpha chains fold back, contributing a fourth strand to the coiled coil structure.</text>
</comment>
<comment type="PTM">
    <text>Conversion of fibrinogen to fibrin is triggered by thrombin, which cleaves fibrinopeptides A and B from alpha and beta chains, and thus exposes the N-terminal polymerization sites responsible for the formation of the soft clot. The soft clot is converted into the hard clot by factor XIIIA which catalyzes the epsilon-(gamma-glutamyl)lysine cross-linking between gamma chains (stronger) and between alpha chains (weaker) of different monomers.</text>
</comment>
<comment type="PTM">
    <text>Forms F13A-mediated cross-links between a glutamine and the epsilon-amino group of a lysine residue, forming fibronectin-fibrinogen heteropolymers.</text>
</comment>
<dbReference type="GO" id="GO:0005576">
    <property type="term" value="C:extracellular region"/>
    <property type="evidence" value="ECO:0007669"/>
    <property type="project" value="UniProtKB-SubCell"/>
</dbReference>
<dbReference type="GO" id="GO:0002250">
    <property type="term" value="P:adaptive immune response"/>
    <property type="evidence" value="ECO:0007669"/>
    <property type="project" value="UniProtKB-KW"/>
</dbReference>
<dbReference type="GO" id="GO:0007596">
    <property type="term" value="P:blood coagulation"/>
    <property type="evidence" value="ECO:0007669"/>
    <property type="project" value="UniProtKB-KW"/>
</dbReference>
<dbReference type="GO" id="GO:0045087">
    <property type="term" value="P:innate immune response"/>
    <property type="evidence" value="ECO:0007669"/>
    <property type="project" value="UniProtKB-KW"/>
</dbReference>
<keyword id="KW-1064">Adaptive immunity</keyword>
<keyword id="KW-0094">Blood coagulation</keyword>
<keyword id="KW-0175">Coiled coil</keyword>
<keyword id="KW-0903">Direct protein sequencing</keyword>
<keyword id="KW-1015">Disulfide bond</keyword>
<keyword id="KW-0356">Hemostasis</keyword>
<keyword id="KW-0391">Immunity</keyword>
<keyword id="KW-0399">Innate immunity</keyword>
<keyword id="KW-0964">Secreted</keyword>
<sequence length="18" mass="1834">TDPDADKGEFLAEGGGVR</sequence>
<name>FIBA_LAMVI</name>